<dbReference type="EMBL" id="AP007255">
    <property type="protein sequence ID" value="BAE53152.1"/>
    <property type="molecule type" value="Genomic_DNA"/>
</dbReference>
<dbReference type="RefSeq" id="WP_011386696.1">
    <property type="nucleotide sequence ID" value="NC_007626.1"/>
</dbReference>
<dbReference type="SMR" id="Q2VZ23"/>
<dbReference type="STRING" id="342108.amb4348"/>
<dbReference type="KEGG" id="mag:amb4348"/>
<dbReference type="HOGENOM" id="CLU_075939_0_0_5"/>
<dbReference type="OrthoDB" id="9806411at2"/>
<dbReference type="Proteomes" id="UP000007058">
    <property type="component" value="Chromosome"/>
</dbReference>
<dbReference type="GO" id="GO:0022625">
    <property type="term" value="C:cytosolic large ribosomal subunit"/>
    <property type="evidence" value="ECO:0007669"/>
    <property type="project" value="TreeGrafter"/>
</dbReference>
<dbReference type="GO" id="GO:0008097">
    <property type="term" value="F:5S rRNA binding"/>
    <property type="evidence" value="ECO:0007669"/>
    <property type="project" value="InterPro"/>
</dbReference>
<dbReference type="GO" id="GO:0003735">
    <property type="term" value="F:structural constituent of ribosome"/>
    <property type="evidence" value="ECO:0007669"/>
    <property type="project" value="InterPro"/>
</dbReference>
<dbReference type="GO" id="GO:0006412">
    <property type="term" value="P:translation"/>
    <property type="evidence" value="ECO:0007669"/>
    <property type="project" value="UniProtKB-UniRule"/>
</dbReference>
<dbReference type="CDD" id="cd00495">
    <property type="entry name" value="Ribosomal_L25_TL5_CTC"/>
    <property type="match status" value="1"/>
</dbReference>
<dbReference type="Gene3D" id="2.170.120.20">
    <property type="entry name" value="Ribosomal protein L25, beta domain"/>
    <property type="match status" value="1"/>
</dbReference>
<dbReference type="Gene3D" id="2.40.240.10">
    <property type="entry name" value="Ribosomal Protein L25, Chain P"/>
    <property type="match status" value="1"/>
</dbReference>
<dbReference type="HAMAP" id="MF_01334">
    <property type="entry name" value="Ribosomal_bL25_CTC"/>
    <property type="match status" value="1"/>
</dbReference>
<dbReference type="InterPro" id="IPR020056">
    <property type="entry name" value="Rbsml_bL25/Gln-tRNA_synth_N"/>
</dbReference>
<dbReference type="InterPro" id="IPR011035">
    <property type="entry name" value="Ribosomal_bL25/Gln-tRNA_synth"/>
</dbReference>
<dbReference type="InterPro" id="IPR020057">
    <property type="entry name" value="Ribosomal_bL25_b-dom"/>
</dbReference>
<dbReference type="InterPro" id="IPR037121">
    <property type="entry name" value="Ribosomal_bL25_C"/>
</dbReference>
<dbReference type="InterPro" id="IPR001021">
    <property type="entry name" value="Ribosomal_bL25_long"/>
</dbReference>
<dbReference type="InterPro" id="IPR029751">
    <property type="entry name" value="Ribosomal_L25_dom"/>
</dbReference>
<dbReference type="InterPro" id="IPR020930">
    <property type="entry name" value="Ribosomal_uL5_bac-type"/>
</dbReference>
<dbReference type="NCBIfam" id="TIGR00731">
    <property type="entry name" value="bL25_bact_ctc"/>
    <property type="match status" value="1"/>
</dbReference>
<dbReference type="NCBIfam" id="NF004128">
    <property type="entry name" value="PRK05618.1-2"/>
    <property type="match status" value="1"/>
</dbReference>
<dbReference type="NCBIfam" id="NF004612">
    <property type="entry name" value="PRK05943.1"/>
    <property type="match status" value="1"/>
</dbReference>
<dbReference type="PANTHER" id="PTHR33284">
    <property type="entry name" value="RIBOSOMAL PROTEIN L25/GLN-TRNA SYNTHETASE, ANTI-CODON-BINDING DOMAIN-CONTAINING PROTEIN"/>
    <property type="match status" value="1"/>
</dbReference>
<dbReference type="PANTHER" id="PTHR33284:SF1">
    <property type="entry name" value="RIBOSOMAL PROTEIN L25_GLN-TRNA SYNTHETASE, ANTI-CODON-BINDING DOMAIN-CONTAINING PROTEIN"/>
    <property type="match status" value="1"/>
</dbReference>
<dbReference type="Pfam" id="PF01386">
    <property type="entry name" value="Ribosomal_L25p"/>
    <property type="match status" value="1"/>
</dbReference>
<dbReference type="Pfam" id="PF14693">
    <property type="entry name" value="Ribosomal_TL5_C"/>
    <property type="match status" value="1"/>
</dbReference>
<dbReference type="SUPFAM" id="SSF50715">
    <property type="entry name" value="Ribosomal protein L25-like"/>
    <property type="match status" value="1"/>
</dbReference>
<evidence type="ECO:0000255" key="1">
    <source>
        <dbReference type="HAMAP-Rule" id="MF_01334"/>
    </source>
</evidence>
<evidence type="ECO:0000305" key="2"/>
<gene>
    <name evidence="1" type="primary">rplY</name>
    <name evidence="1" type="synonym">ctc</name>
    <name type="ordered locus">amb4348</name>
</gene>
<sequence length="202" mass="21464">MSEAIAIAAELRDGSGKGAARATRRAGKVPGVIYGDKKAAICIQMDPRVVWAQISKTGFFTQLFNVDLGKDGKHLCLARDVQMHPVTDQPIHVDFMRVSADHAIHVKVPVHFTNELKSPGIKKGGVLNVELHEIEITCSPNDIPHEILIDLDGLEIGASIHLSDLKLPAGAKPYHVASGATVASIAAPTVARAETTETEAAG</sequence>
<keyword id="KW-0687">Ribonucleoprotein</keyword>
<keyword id="KW-0689">Ribosomal protein</keyword>
<keyword id="KW-0694">RNA-binding</keyword>
<keyword id="KW-0699">rRNA-binding</keyword>
<accession>Q2VZ23</accession>
<organism>
    <name type="scientific">Paramagnetospirillum magneticum (strain ATCC 700264 / AMB-1)</name>
    <name type="common">Magnetospirillum magneticum</name>
    <dbReference type="NCBI Taxonomy" id="342108"/>
    <lineage>
        <taxon>Bacteria</taxon>
        <taxon>Pseudomonadati</taxon>
        <taxon>Pseudomonadota</taxon>
        <taxon>Alphaproteobacteria</taxon>
        <taxon>Rhodospirillales</taxon>
        <taxon>Magnetospirillaceae</taxon>
        <taxon>Paramagnetospirillum</taxon>
    </lineage>
</organism>
<proteinExistence type="inferred from homology"/>
<reference key="1">
    <citation type="journal article" date="2005" name="DNA Res.">
        <title>Complete genome sequence of the facultative anaerobic magnetotactic bacterium Magnetospirillum sp. strain AMB-1.</title>
        <authorList>
            <person name="Matsunaga T."/>
            <person name="Okamura Y."/>
            <person name="Fukuda Y."/>
            <person name="Wahyudi A.T."/>
            <person name="Murase Y."/>
            <person name="Takeyama H."/>
        </authorList>
    </citation>
    <scope>NUCLEOTIDE SEQUENCE [LARGE SCALE GENOMIC DNA]</scope>
    <source>
        <strain>ATCC 700264 / AMB-1</strain>
    </source>
</reference>
<protein>
    <recommendedName>
        <fullName evidence="1">Large ribosomal subunit protein bL25</fullName>
    </recommendedName>
    <alternativeName>
        <fullName evidence="2">50S ribosomal protein L25</fullName>
    </alternativeName>
    <alternativeName>
        <fullName evidence="1">General stress protein CTC</fullName>
    </alternativeName>
</protein>
<feature type="chain" id="PRO_0000244215" description="Large ribosomal subunit protein bL25">
    <location>
        <begin position="1"/>
        <end position="202"/>
    </location>
</feature>
<comment type="function">
    <text evidence="1">This is one of the proteins that binds to the 5S RNA in the ribosome where it forms part of the central protuberance.</text>
</comment>
<comment type="subunit">
    <text evidence="1">Part of the 50S ribosomal subunit; part of the 5S rRNA/L5/L18/L25 subcomplex. Contacts the 5S rRNA. Binds to the 5S rRNA independently of L5 and L18.</text>
</comment>
<comment type="similarity">
    <text evidence="1">Belongs to the bacterial ribosomal protein bL25 family. CTC subfamily.</text>
</comment>
<name>RL25_PARM1</name>